<reference key="1">
    <citation type="journal article" date="2002" name="Nature">
        <title>Comparison of the genomes of two Xanthomonas pathogens with differing host specificities.</title>
        <authorList>
            <person name="da Silva A.C.R."/>
            <person name="Ferro J.A."/>
            <person name="Reinach F.C."/>
            <person name="Farah C.S."/>
            <person name="Furlan L.R."/>
            <person name="Quaggio R.B."/>
            <person name="Monteiro-Vitorello C.B."/>
            <person name="Van Sluys M.A."/>
            <person name="Almeida N.F. Jr."/>
            <person name="Alves L.M.C."/>
            <person name="do Amaral A.M."/>
            <person name="Bertolini M.C."/>
            <person name="Camargo L.E.A."/>
            <person name="Camarotte G."/>
            <person name="Cannavan F."/>
            <person name="Cardozo J."/>
            <person name="Chambergo F."/>
            <person name="Ciapina L.P."/>
            <person name="Cicarelli R.M.B."/>
            <person name="Coutinho L.L."/>
            <person name="Cursino-Santos J.R."/>
            <person name="El-Dorry H."/>
            <person name="Faria J.B."/>
            <person name="Ferreira A.J.S."/>
            <person name="Ferreira R.C.C."/>
            <person name="Ferro M.I.T."/>
            <person name="Formighieri E.F."/>
            <person name="Franco M.C."/>
            <person name="Greggio C.C."/>
            <person name="Gruber A."/>
            <person name="Katsuyama A.M."/>
            <person name="Kishi L.T."/>
            <person name="Leite R.P."/>
            <person name="Lemos E.G.M."/>
            <person name="Lemos M.V.F."/>
            <person name="Locali E.C."/>
            <person name="Machado M.A."/>
            <person name="Madeira A.M.B.N."/>
            <person name="Martinez-Rossi N.M."/>
            <person name="Martins E.C."/>
            <person name="Meidanis J."/>
            <person name="Menck C.F.M."/>
            <person name="Miyaki C.Y."/>
            <person name="Moon D.H."/>
            <person name="Moreira L.M."/>
            <person name="Novo M.T.M."/>
            <person name="Okura V.K."/>
            <person name="Oliveira M.C."/>
            <person name="Oliveira V.R."/>
            <person name="Pereira H.A."/>
            <person name="Rossi A."/>
            <person name="Sena J.A.D."/>
            <person name="Silva C."/>
            <person name="de Souza R.F."/>
            <person name="Spinola L.A.F."/>
            <person name="Takita M.A."/>
            <person name="Tamura R.E."/>
            <person name="Teixeira E.C."/>
            <person name="Tezza R.I.D."/>
            <person name="Trindade dos Santos M."/>
            <person name="Truffi D."/>
            <person name="Tsai S.M."/>
            <person name="White F.F."/>
            <person name="Setubal J.C."/>
            <person name="Kitajima J.P."/>
        </authorList>
    </citation>
    <scope>NUCLEOTIDE SEQUENCE [LARGE SCALE GENOMIC DNA]</scope>
    <source>
        <strain>ATCC 33913 / DSM 3586 / NCPPB 528 / LMG 568 / P 25</strain>
    </source>
</reference>
<dbReference type="EC" id="4.2.1.33" evidence="1"/>
<dbReference type="EMBL" id="AE008922">
    <property type="protein sequence ID" value="AAM42600.1"/>
    <property type="molecule type" value="Genomic_DNA"/>
</dbReference>
<dbReference type="RefSeq" id="NP_638676.1">
    <property type="nucleotide sequence ID" value="NC_003902.1"/>
</dbReference>
<dbReference type="RefSeq" id="WP_011038429.1">
    <property type="nucleotide sequence ID" value="NC_003902.1"/>
</dbReference>
<dbReference type="SMR" id="Q8P5K9"/>
<dbReference type="STRING" id="190485.XCC3330"/>
<dbReference type="EnsemblBacteria" id="AAM42600">
    <property type="protein sequence ID" value="AAM42600"/>
    <property type="gene ID" value="XCC3330"/>
</dbReference>
<dbReference type="KEGG" id="xcc:XCC3330"/>
<dbReference type="PATRIC" id="fig|190485.4.peg.3561"/>
<dbReference type="eggNOG" id="COG0066">
    <property type="taxonomic scope" value="Bacteria"/>
</dbReference>
<dbReference type="HOGENOM" id="CLU_081378_0_3_6"/>
<dbReference type="OrthoDB" id="9777465at2"/>
<dbReference type="UniPathway" id="UPA00048">
    <property type="reaction ID" value="UER00071"/>
</dbReference>
<dbReference type="Proteomes" id="UP000001010">
    <property type="component" value="Chromosome"/>
</dbReference>
<dbReference type="GO" id="GO:0009316">
    <property type="term" value="C:3-isopropylmalate dehydratase complex"/>
    <property type="evidence" value="ECO:0007669"/>
    <property type="project" value="InterPro"/>
</dbReference>
<dbReference type="GO" id="GO:0003861">
    <property type="term" value="F:3-isopropylmalate dehydratase activity"/>
    <property type="evidence" value="ECO:0007669"/>
    <property type="project" value="UniProtKB-UniRule"/>
</dbReference>
<dbReference type="GO" id="GO:0009098">
    <property type="term" value="P:L-leucine biosynthetic process"/>
    <property type="evidence" value="ECO:0007669"/>
    <property type="project" value="UniProtKB-UniRule"/>
</dbReference>
<dbReference type="CDD" id="cd01577">
    <property type="entry name" value="IPMI_Swivel"/>
    <property type="match status" value="1"/>
</dbReference>
<dbReference type="FunFam" id="3.20.19.10:FF:000003">
    <property type="entry name" value="3-isopropylmalate dehydratase small subunit"/>
    <property type="match status" value="1"/>
</dbReference>
<dbReference type="Gene3D" id="3.20.19.10">
    <property type="entry name" value="Aconitase, domain 4"/>
    <property type="match status" value="1"/>
</dbReference>
<dbReference type="HAMAP" id="MF_01031">
    <property type="entry name" value="LeuD_type1"/>
    <property type="match status" value="1"/>
</dbReference>
<dbReference type="InterPro" id="IPR004431">
    <property type="entry name" value="3-IsopropMal_deHydase_ssu"/>
</dbReference>
<dbReference type="InterPro" id="IPR015928">
    <property type="entry name" value="Aconitase/3IPM_dehydase_swvl"/>
</dbReference>
<dbReference type="InterPro" id="IPR000573">
    <property type="entry name" value="AconitaseA/IPMdHydase_ssu_swvl"/>
</dbReference>
<dbReference type="InterPro" id="IPR033940">
    <property type="entry name" value="IPMI_Swivel"/>
</dbReference>
<dbReference type="InterPro" id="IPR050075">
    <property type="entry name" value="LeuD"/>
</dbReference>
<dbReference type="NCBIfam" id="TIGR00171">
    <property type="entry name" value="leuD"/>
    <property type="match status" value="1"/>
</dbReference>
<dbReference type="NCBIfam" id="NF002458">
    <property type="entry name" value="PRK01641.1"/>
    <property type="match status" value="1"/>
</dbReference>
<dbReference type="PANTHER" id="PTHR43345:SF5">
    <property type="entry name" value="3-ISOPROPYLMALATE DEHYDRATASE SMALL SUBUNIT"/>
    <property type="match status" value="1"/>
</dbReference>
<dbReference type="PANTHER" id="PTHR43345">
    <property type="entry name" value="3-ISOPROPYLMALATE DEHYDRATASE SMALL SUBUNIT 2-RELATED-RELATED"/>
    <property type="match status" value="1"/>
</dbReference>
<dbReference type="Pfam" id="PF00694">
    <property type="entry name" value="Aconitase_C"/>
    <property type="match status" value="1"/>
</dbReference>
<dbReference type="SUPFAM" id="SSF52016">
    <property type="entry name" value="LeuD/IlvD-like"/>
    <property type="match status" value="1"/>
</dbReference>
<comment type="function">
    <text evidence="1">Catalyzes the isomerization between 2-isopropylmalate and 3-isopropylmalate, via the formation of 2-isopropylmaleate.</text>
</comment>
<comment type="catalytic activity">
    <reaction evidence="1">
        <text>(2R,3S)-3-isopropylmalate = (2S)-2-isopropylmalate</text>
        <dbReference type="Rhea" id="RHEA:32287"/>
        <dbReference type="ChEBI" id="CHEBI:1178"/>
        <dbReference type="ChEBI" id="CHEBI:35121"/>
        <dbReference type="EC" id="4.2.1.33"/>
    </reaction>
</comment>
<comment type="pathway">
    <text evidence="1">Amino-acid biosynthesis; L-leucine biosynthesis; L-leucine from 3-methyl-2-oxobutanoate: step 2/4.</text>
</comment>
<comment type="subunit">
    <text evidence="1">Heterodimer of LeuC and LeuD.</text>
</comment>
<comment type="similarity">
    <text evidence="1">Belongs to the LeuD family. LeuD type 1 subfamily.</text>
</comment>
<keyword id="KW-0028">Amino-acid biosynthesis</keyword>
<keyword id="KW-0100">Branched-chain amino acid biosynthesis</keyword>
<keyword id="KW-0432">Leucine biosynthesis</keyword>
<keyword id="KW-0456">Lyase</keyword>
<keyword id="KW-1185">Reference proteome</keyword>
<organism>
    <name type="scientific">Xanthomonas campestris pv. campestris (strain ATCC 33913 / DSM 3586 / NCPPB 528 / LMG 568 / P 25)</name>
    <dbReference type="NCBI Taxonomy" id="190485"/>
    <lineage>
        <taxon>Bacteria</taxon>
        <taxon>Pseudomonadati</taxon>
        <taxon>Pseudomonadota</taxon>
        <taxon>Gammaproteobacteria</taxon>
        <taxon>Lysobacterales</taxon>
        <taxon>Lysobacteraceae</taxon>
        <taxon>Xanthomonas</taxon>
    </lineage>
</organism>
<feature type="chain" id="PRO_0000141911" description="3-isopropylmalate dehydratase small subunit">
    <location>
        <begin position="1"/>
        <end position="215"/>
    </location>
</feature>
<protein>
    <recommendedName>
        <fullName evidence="1">3-isopropylmalate dehydratase small subunit</fullName>
        <ecNumber evidence="1">4.2.1.33</ecNumber>
    </recommendedName>
    <alternativeName>
        <fullName evidence="1">Alpha-IPM isomerase</fullName>
        <shortName evidence="1">IPMI</shortName>
    </alternativeName>
    <alternativeName>
        <fullName evidence="1">Isopropylmalate isomerase</fullName>
    </alternativeName>
</protein>
<sequence>MTPFTQHTGLVAPLDRANVDTDQIIPKQFLKSIKRTGFGPNLFDEWRYLDIGEPGRDNSTRPLNQEFVLNFPRYQGASVLLARENFGCGSSREHAPWALDEYGFRAVIAPSFADIFYNNSFKNGLLPIVLAEAEMDALFEQCLGNEGYQLTVDLAAQRVRRPDGVEYAFEIDAFRKHCLLNGLDDIGLTLQDADAIGRFEQGHRAQQPWLFGALQ</sequence>
<evidence type="ECO:0000255" key="1">
    <source>
        <dbReference type="HAMAP-Rule" id="MF_01031"/>
    </source>
</evidence>
<name>LEUD_XANCP</name>
<gene>
    <name evidence="1" type="primary">leuD</name>
    <name type="ordered locus">XCC3330</name>
</gene>
<proteinExistence type="inferred from homology"/>
<accession>Q8P5K9</accession>